<accession>A0KAR0</accession>
<keyword id="KW-0997">Cell inner membrane</keyword>
<keyword id="KW-1003">Cell membrane</keyword>
<keyword id="KW-0350">Heme biosynthesis</keyword>
<keyword id="KW-0472">Membrane</keyword>
<keyword id="KW-0808">Transferase</keyword>
<keyword id="KW-0812">Transmembrane</keyword>
<keyword id="KW-1133">Transmembrane helix</keyword>
<dbReference type="EC" id="2.5.1.141" evidence="1"/>
<dbReference type="EMBL" id="CP000458">
    <property type="protein sequence ID" value="ABK09587.1"/>
    <property type="molecule type" value="Genomic_DNA"/>
</dbReference>
<dbReference type="SMR" id="A0KAR0"/>
<dbReference type="KEGG" id="bch:Bcen2424_2837"/>
<dbReference type="HOGENOM" id="CLU_029631_0_2_4"/>
<dbReference type="UniPathway" id="UPA00834">
    <property type="reaction ID" value="UER00712"/>
</dbReference>
<dbReference type="GO" id="GO:0005886">
    <property type="term" value="C:plasma membrane"/>
    <property type="evidence" value="ECO:0007669"/>
    <property type="project" value="UniProtKB-SubCell"/>
</dbReference>
<dbReference type="GO" id="GO:0008495">
    <property type="term" value="F:protoheme IX farnesyltransferase activity"/>
    <property type="evidence" value="ECO:0007669"/>
    <property type="project" value="UniProtKB-UniRule"/>
</dbReference>
<dbReference type="GO" id="GO:0048034">
    <property type="term" value="P:heme O biosynthetic process"/>
    <property type="evidence" value="ECO:0007669"/>
    <property type="project" value="UniProtKB-UniRule"/>
</dbReference>
<dbReference type="CDD" id="cd13957">
    <property type="entry name" value="PT_UbiA_Cox10"/>
    <property type="match status" value="1"/>
</dbReference>
<dbReference type="Gene3D" id="1.10.357.140">
    <property type="entry name" value="UbiA prenyltransferase"/>
    <property type="match status" value="1"/>
</dbReference>
<dbReference type="HAMAP" id="MF_00154">
    <property type="entry name" value="CyoE_CtaB"/>
    <property type="match status" value="1"/>
</dbReference>
<dbReference type="InterPro" id="IPR006369">
    <property type="entry name" value="Protohaem_IX_farnesylTrfase"/>
</dbReference>
<dbReference type="InterPro" id="IPR000537">
    <property type="entry name" value="UbiA_prenyltransferase"/>
</dbReference>
<dbReference type="InterPro" id="IPR030470">
    <property type="entry name" value="UbiA_prenylTrfase_CS"/>
</dbReference>
<dbReference type="InterPro" id="IPR044878">
    <property type="entry name" value="UbiA_sf"/>
</dbReference>
<dbReference type="NCBIfam" id="TIGR01473">
    <property type="entry name" value="cyoE_ctaB"/>
    <property type="match status" value="1"/>
</dbReference>
<dbReference type="NCBIfam" id="NF003349">
    <property type="entry name" value="PRK04375.1-2"/>
    <property type="match status" value="1"/>
</dbReference>
<dbReference type="PANTHER" id="PTHR43448:SF7">
    <property type="entry name" value="4-HYDROXYBENZOATE SOLANESYLTRANSFERASE"/>
    <property type="match status" value="1"/>
</dbReference>
<dbReference type="PANTHER" id="PTHR43448">
    <property type="entry name" value="PROTOHEME IX FARNESYLTRANSFERASE, MITOCHONDRIAL"/>
    <property type="match status" value="1"/>
</dbReference>
<dbReference type="Pfam" id="PF01040">
    <property type="entry name" value="UbiA"/>
    <property type="match status" value="1"/>
</dbReference>
<dbReference type="PROSITE" id="PS00943">
    <property type="entry name" value="UBIA"/>
    <property type="match status" value="1"/>
</dbReference>
<proteinExistence type="inferred from homology"/>
<reference key="1">
    <citation type="submission" date="2006-08" db="EMBL/GenBank/DDBJ databases">
        <title>Complete sequence of chromosome 1 of Burkholderia cenocepacia HI2424.</title>
        <authorList>
            <person name="Copeland A."/>
            <person name="Lucas S."/>
            <person name="Lapidus A."/>
            <person name="Barry K."/>
            <person name="Detter J.C."/>
            <person name="Glavina del Rio T."/>
            <person name="Hammon N."/>
            <person name="Israni S."/>
            <person name="Pitluck S."/>
            <person name="Chain P."/>
            <person name="Malfatti S."/>
            <person name="Shin M."/>
            <person name="Vergez L."/>
            <person name="Schmutz J."/>
            <person name="Larimer F."/>
            <person name="Land M."/>
            <person name="Hauser L."/>
            <person name="Kyrpides N."/>
            <person name="Kim E."/>
            <person name="LiPuma J.J."/>
            <person name="Gonzalez C.F."/>
            <person name="Konstantinidis K."/>
            <person name="Tiedje J.M."/>
            <person name="Richardson P."/>
        </authorList>
    </citation>
    <scope>NUCLEOTIDE SEQUENCE [LARGE SCALE GENOMIC DNA]</scope>
    <source>
        <strain>HI2424</strain>
    </source>
</reference>
<evidence type="ECO:0000255" key="1">
    <source>
        <dbReference type="HAMAP-Rule" id="MF_00154"/>
    </source>
</evidence>
<protein>
    <recommendedName>
        <fullName evidence="1">Protoheme IX farnesyltransferase</fullName>
        <ecNumber evidence="1">2.5.1.141</ecNumber>
    </recommendedName>
    <alternativeName>
        <fullName evidence="1">Heme B farnesyltransferase</fullName>
    </alternativeName>
    <alternativeName>
        <fullName evidence="1">Heme O synthase</fullName>
    </alternativeName>
</protein>
<sequence length="300" mass="32976">MQSTLSQSPGSRFSQYMALTKPRVTQLAVFCAVIGMFLATPGMVPWHVLIGGTVGIWLLAGAAFAINCLVEQKIDAMMRRTAWRPSARGEITTPQILLFSAVLGSVGAWTLYTFTNPLTMWLTIATFVGYAVIYTLLLKPMTPQNIVIGGASGAMPPALGWAAVTGAVPGDAWILVLIIFVWTPPHFWVLALYRRKDYENAGLPMLPVTHGEKFTRLHILLYTVILFAVTLMPFISGMSGAVYLTSAVLLGAVFLAYAWKIHRDYSDELARKAFRYSIVYLSLLFAALLVDHYARPLLGV</sequence>
<comment type="function">
    <text evidence="1">Converts heme B (protoheme IX) to heme O by substitution of the vinyl group on carbon 2 of heme B porphyrin ring with a hydroxyethyl farnesyl side group.</text>
</comment>
<comment type="catalytic activity">
    <reaction evidence="1">
        <text>heme b + (2E,6E)-farnesyl diphosphate + H2O = Fe(II)-heme o + diphosphate</text>
        <dbReference type="Rhea" id="RHEA:28070"/>
        <dbReference type="ChEBI" id="CHEBI:15377"/>
        <dbReference type="ChEBI" id="CHEBI:33019"/>
        <dbReference type="ChEBI" id="CHEBI:60344"/>
        <dbReference type="ChEBI" id="CHEBI:60530"/>
        <dbReference type="ChEBI" id="CHEBI:175763"/>
        <dbReference type="EC" id="2.5.1.141"/>
    </reaction>
</comment>
<comment type="pathway">
    <text evidence="1">Porphyrin-containing compound metabolism; heme O biosynthesis; heme O from protoheme: step 1/1.</text>
</comment>
<comment type="subcellular location">
    <subcellularLocation>
        <location evidence="1">Cell inner membrane</location>
        <topology evidence="1">Multi-pass membrane protein</topology>
    </subcellularLocation>
</comment>
<comment type="miscellaneous">
    <text evidence="1">Carbon 2 of the heme B porphyrin ring is defined according to the Fischer nomenclature.</text>
</comment>
<comment type="similarity">
    <text evidence="1">Belongs to the UbiA prenyltransferase family. Protoheme IX farnesyltransferase subfamily.</text>
</comment>
<gene>
    <name evidence="1" type="primary">ctaB</name>
    <name type="ordered locus">Bcen2424_2837</name>
</gene>
<name>COXX_BURCH</name>
<organism>
    <name type="scientific">Burkholderia cenocepacia (strain HI2424)</name>
    <dbReference type="NCBI Taxonomy" id="331272"/>
    <lineage>
        <taxon>Bacteria</taxon>
        <taxon>Pseudomonadati</taxon>
        <taxon>Pseudomonadota</taxon>
        <taxon>Betaproteobacteria</taxon>
        <taxon>Burkholderiales</taxon>
        <taxon>Burkholderiaceae</taxon>
        <taxon>Burkholderia</taxon>
        <taxon>Burkholderia cepacia complex</taxon>
    </lineage>
</organism>
<feature type="chain" id="PRO_0000327022" description="Protoheme IX farnesyltransferase">
    <location>
        <begin position="1"/>
        <end position="300"/>
    </location>
</feature>
<feature type="transmembrane region" description="Helical" evidence="1">
    <location>
        <begin position="24"/>
        <end position="44"/>
    </location>
</feature>
<feature type="transmembrane region" description="Helical" evidence="1">
    <location>
        <begin position="46"/>
        <end position="66"/>
    </location>
</feature>
<feature type="transmembrane region" description="Helical" evidence="1">
    <location>
        <begin position="94"/>
        <end position="114"/>
    </location>
</feature>
<feature type="transmembrane region" description="Helical" evidence="1">
    <location>
        <begin position="118"/>
        <end position="138"/>
    </location>
</feature>
<feature type="transmembrane region" description="Helical" evidence="1">
    <location>
        <begin position="146"/>
        <end position="166"/>
    </location>
</feature>
<feature type="transmembrane region" description="Helical" evidence="1">
    <location>
        <begin position="172"/>
        <end position="192"/>
    </location>
</feature>
<feature type="transmembrane region" description="Helical" evidence="1">
    <location>
        <begin position="217"/>
        <end position="237"/>
    </location>
</feature>
<feature type="transmembrane region" description="Helical" evidence="1">
    <location>
        <begin position="239"/>
        <end position="259"/>
    </location>
</feature>
<feature type="transmembrane region" description="Helical" evidence="1">
    <location>
        <begin position="278"/>
        <end position="298"/>
    </location>
</feature>